<gene>
    <name type="primary">RH57</name>
    <name type="ordered locus">At3g09720</name>
    <name type="ORF">F11F8_31</name>
</gene>
<accession>Q84TG1</accession>
<accession>Q0WU58</accession>
<accession>Q9SF31</accession>
<dbReference type="EC" id="3.6.4.13"/>
<dbReference type="EMBL" id="AC016661">
    <property type="protein sequence ID" value="AAF23311.1"/>
    <property type="status" value="ALT_SEQ"/>
    <property type="molecule type" value="Genomic_DNA"/>
</dbReference>
<dbReference type="EMBL" id="CP002686">
    <property type="protein sequence ID" value="AEE74803.1"/>
    <property type="molecule type" value="Genomic_DNA"/>
</dbReference>
<dbReference type="EMBL" id="CP002686">
    <property type="protein sequence ID" value="ANM64583.1"/>
    <property type="molecule type" value="Genomic_DNA"/>
</dbReference>
<dbReference type="EMBL" id="BT005833">
    <property type="protein sequence ID" value="AAO64768.1"/>
    <property type="molecule type" value="mRNA"/>
</dbReference>
<dbReference type="EMBL" id="AK227326">
    <property type="protein sequence ID" value="BAE99340.1"/>
    <property type="molecule type" value="mRNA"/>
</dbReference>
<dbReference type="RefSeq" id="NP_001326599.1">
    <property type="nucleotide sequence ID" value="NM_001337839.1"/>
</dbReference>
<dbReference type="RefSeq" id="NP_187583.2">
    <property type="nucleotide sequence ID" value="NM_111806.7"/>
</dbReference>
<dbReference type="SMR" id="Q84TG1"/>
<dbReference type="FunCoup" id="Q84TG1">
    <property type="interactions" value="3996"/>
</dbReference>
<dbReference type="STRING" id="3702.Q84TG1"/>
<dbReference type="iPTMnet" id="Q84TG1"/>
<dbReference type="PaxDb" id="3702-AT3G09720.1"/>
<dbReference type="ProteomicsDB" id="236180"/>
<dbReference type="EnsemblPlants" id="AT3G09720.1">
    <property type="protein sequence ID" value="AT3G09720.1"/>
    <property type="gene ID" value="AT3G09720"/>
</dbReference>
<dbReference type="EnsemblPlants" id="AT3G09720.2">
    <property type="protein sequence ID" value="AT3G09720.2"/>
    <property type="gene ID" value="AT3G09720"/>
</dbReference>
<dbReference type="GeneID" id="820129"/>
<dbReference type="Gramene" id="AT3G09720.1">
    <property type="protein sequence ID" value="AT3G09720.1"/>
    <property type="gene ID" value="AT3G09720"/>
</dbReference>
<dbReference type="Gramene" id="AT3G09720.2">
    <property type="protein sequence ID" value="AT3G09720.2"/>
    <property type="gene ID" value="AT3G09720"/>
</dbReference>
<dbReference type="KEGG" id="ath:AT3G09720"/>
<dbReference type="Araport" id="AT3G09720"/>
<dbReference type="TAIR" id="AT3G09720">
    <property type="gene designation" value="RH57"/>
</dbReference>
<dbReference type="eggNOG" id="KOG0344">
    <property type="taxonomic scope" value="Eukaryota"/>
</dbReference>
<dbReference type="HOGENOM" id="CLU_003041_1_4_1"/>
<dbReference type="InParanoid" id="Q84TG1"/>
<dbReference type="OMA" id="EMAHSIM"/>
<dbReference type="OrthoDB" id="360161at2759"/>
<dbReference type="PhylomeDB" id="Q84TG1"/>
<dbReference type="BRENDA" id="3.6.1.B17">
    <property type="organism ID" value="399"/>
</dbReference>
<dbReference type="CD-CODE" id="4299E36E">
    <property type="entry name" value="Nucleolus"/>
</dbReference>
<dbReference type="PRO" id="PR:Q84TG1"/>
<dbReference type="Proteomes" id="UP000006548">
    <property type="component" value="Chromosome 3"/>
</dbReference>
<dbReference type="ExpressionAtlas" id="Q84TG1">
    <property type="expression patterns" value="baseline and differential"/>
</dbReference>
<dbReference type="GO" id="GO:0005524">
    <property type="term" value="F:ATP binding"/>
    <property type="evidence" value="ECO:0007669"/>
    <property type="project" value="UniProtKB-KW"/>
</dbReference>
<dbReference type="GO" id="GO:0016887">
    <property type="term" value="F:ATP hydrolysis activity"/>
    <property type="evidence" value="ECO:0007669"/>
    <property type="project" value="RHEA"/>
</dbReference>
<dbReference type="GO" id="GO:0003723">
    <property type="term" value="F:RNA binding"/>
    <property type="evidence" value="ECO:0007669"/>
    <property type="project" value="UniProtKB-KW"/>
</dbReference>
<dbReference type="GO" id="GO:0003724">
    <property type="term" value="F:RNA helicase activity"/>
    <property type="evidence" value="ECO:0007669"/>
    <property type="project" value="UniProtKB-EC"/>
</dbReference>
<dbReference type="GO" id="GO:0030490">
    <property type="term" value="P:maturation of SSU-rRNA"/>
    <property type="evidence" value="ECO:0007669"/>
    <property type="project" value="InterPro"/>
</dbReference>
<dbReference type="CDD" id="cd17957">
    <property type="entry name" value="DEADc_DDX52"/>
    <property type="match status" value="1"/>
</dbReference>
<dbReference type="CDD" id="cd18787">
    <property type="entry name" value="SF2_C_DEAD"/>
    <property type="match status" value="1"/>
</dbReference>
<dbReference type="Gene3D" id="3.40.50.300">
    <property type="entry name" value="P-loop containing nucleotide triphosphate hydrolases"/>
    <property type="match status" value="2"/>
</dbReference>
<dbReference type="InterPro" id="IPR044764">
    <property type="entry name" value="DDX52/Rok1_DEADc"/>
</dbReference>
<dbReference type="InterPro" id="IPR011545">
    <property type="entry name" value="DEAD/DEAH_box_helicase_dom"/>
</dbReference>
<dbReference type="InterPro" id="IPR050079">
    <property type="entry name" value="DEAD_box_RNA_helicase"/>
</dbReference>
<dbReference type="InterPro" id="IPR014001">
    <property type="entry name" value="Helicase_ATP-bd"/>
</dbReference>
<dbReference type="InterPro" id="IPR001650">
    <property type="entry name" value="Helicase_C-like"/>
</dbReference>
<dbReference type="InterPro" id="IPR027417">
    <property type="entry name" value="P-loop_NTPase"/>
</dbReference>
<dbReference type="InterPro" id="IPR014014">
    <property type="entry name" value="RNA_helicase_DEAD_Q_motif"/>
</dbReference>
<dbReference type="PANTHER" id="PTHR47959">
    <property type="entry name" value="ATP-DEPENDENT RNA HELICASE RHLE-RELATED"/>
    <property type="match status" value="1"/>
</dbReference>
<dbReference type="PANTHER" id="PTHR47959:SF15">
    <property type="entry name" value="RNA HELICASE"/>
    <property type="match status" value="1"/>
</dbReference>
<dbReference type="Pfam" id="PF00270">
    <property type="entry name" value="DEAD"/>
    <property type="match status" value="1"/>
</dbReference>
<dbReference type="Pfam" id="PF00271">
    <property type="entry name" value="Helicase_C"/>
    <property type="match status" value="1"/>
</dbReference>
<dbReference type="SMART" id="SM00487">
    <property type="entry name" value="DEXDc"/>
    <property type="match status" value="1"/>
</dbReference>
<dbReference type="SMART" id="SM00490">
    <property type="entry name" value="HELICc"/>
    <property type="match status" value="1"/>
</dbReference>
<dbReference type="SUPFAM" id="SSF52540">
    <property type="entry name" value="P-loop containing nucleoside triphosphate hydrolases"/>
    <property type="match status" value="1"/>
</dbReference>
<dbReference type="PROSITE" id="PS51192">
    <property type="entry name" value="HELICASE_ATP_BIND_1"/>
    <property type="match status" value="1"/>
</dbReference>
<dbReference type="PROSITE" id="PS51194">
    <property type="entry name" value="HELICASE_CTER"/>
    <property type="match status" value="1"/>
</dbReference>
<dbReference type="PROSITE" id="PS51195">
    <property type="entry name" value="Q_MOTIF"/>
    <property type="match status" value="1"/>
</dbReference>
<feature type="chain" id="PRO_0000239196" description="DEAD-box ATP-dependent RNA helicase 57">
    <location>
        <begin position="1"/>
        <end position="541"/>
    </location>
</feature>
<feature type="domain" description="Helicase ATP-binding" evidence="1">
    <location>
        <begin position="172"/>
        <end position="342"/>
    </location>
</feature>
<feature type="domain" description="Helicase C-terminal" evidence="2">
    <location>
        <begin position="370"/>
        <end position="514"/>
    </location>
</feature>
<feature type="region of interest" description="Disordered" evidence="3">
    <location>
        <begin position="43"/>
        <end position="72"/>
    </location>
</feature>
<feature type="region of interest" description="Disordered" evidence="3">
    <location>
        <begin position="517"/>
        <end position="541"/>
    </location>
</feature>
<feature type="short sequence motif" description="Q motif">
    <location>
        <begin position="141"/>
        <end position="169"/>
    </location>
</feature>
<feature type="short sequence motif" description="DEAD box">
    <location>
        <begin position="289"/>
        <end position="292"/>
    </location>
</feature>
<feature type="compositionally biased region" description="Acidic residues" evidence="3">
    <location>
        <begin position="43"/>
        <end position="52"/>
    </location>
</feature>
<feature type="compositionally biased region" description="Basic and acidic residues" evidence="3">
    <location>
        <begin position="525"/>
        <end position="541"/>
    </location>
</feature>
<feature type="binding site" evidence="1">
    <location>
        <begin position="185"/>
        <end position="192"/>
    </location>
    <ligand>
        <name>ATP</name>
        <dbReference type="ChEBI" id="CHEBI:30616"/>
    </ligand>
</feature>
<name>RH57_ARATH</name>
<protein>
    <recommendedName>
        <fullName>DEAD-box ATP-dependent RNA helicase 57</fullName>
        <ecNumber>3.6.4.13</ecNumber>
    </recommendedName>
</protein>
<sequence length="541" mass="60916">MEKSSYFLFGGTNFNKKKFAPDFAKFKNSTEDDDSNKKVNFFVEEEEDTEQPEAEKVIVSSKKRKRRSSNSVPVEGFDVFKSSKKARAKGKAEEQITKNEIVENPKKELNRQMERDALSRKQYSIHVSGNNIPPPLKSFAELSSRYGCEGYILRNLAELGFKEPTPIQRQAIPILLSGRECFACAPTGSGKTFAFICPMLIKLKRPSTDGIRAVILSPARELAAQTAREGKKLIKGSNFHIRLMTKPLVKTADFSKLWCDVLISTPMRLKRAIKAKKIDLSKVEYLVLDESDKLFEQSLLKQIDCVVKACSNPSIIRSLFSATLPDSVEELARSIMHDAVRVIIGRKNTASETVKQKLVFAGSEEGKLLALRQSFAESLNPPVLIFVQSKERAKELYDELKCENIRAGVIHSDLPPGERENAVDQFRAGEKWVLIATDVIARGMDFKGINCVINYDFPDSASAYIHRIGRSGRAGRSGEAITFYTEQDVPFLRNIANTMMSSGCEVPSWIMSLKKKKWRKHRPRRDSISTKPKADKNDTDE</sequence>
<evidence type="ECO:0000255" key="1">
    <source>
        <dbReference type="PROSITE-ProRule" id="PRU00541"/>
    </source>
</evidence>
<evidence type="ECO:0000255" key="2">
    <source>
        <dbReference type="PROSITE-ProRule" id="PRU00542"/>
    </source>
</evidence>
<evidence type="ECO:0000256" key="3">
    <source>
        <dbReference type="SAM" id="MobiDB-lite"/>
    </source>
</evidence>
<evidence type="ECO:0000305" key="4"/>
<keyword id="KW-0067">ATP-binding</keyword>
<keyword id="KW-0347">Helicase</keyword>
<keyword id="KW-0378">Hydrolase</keyword>
<keyword id="KW-0547">Nucleotide-binding</keyword>
<keyword id="KW-1185">Reference proteome</keyword>
<keyword id="KW-0694">RNA-binding</keyword>
<proteinExistence type="evidence at transcript level"/>
<comment type="catalytic activity">
    <reaction>
        <text>ATP + H2O = ADP + phosphate + H(+)</text>
        <dbReference type="Rhea" id="RHEA:13065"/>
        <dbReference type="ChEBI" id="CHEBI:15377"/>
        <dbReference type="ChEBI" id="CHEBI:15378"/>
        <dbReference type="ChEBI" id="CHEBI:30616"/>
        <dbReference type="ChEBI" id="CHEBI:43474"/>
        <dbReference type="ChEBI" id="CHEBI:456216"/>
        <dbReference type="EC" id="3.6.4.13"/>
    </reaction>
</comment>
<comment type="domain">
    <text>The Q motif is unique to and characteristic of the DEAD box family of RNA helicases and controls ATP binding and hydrolysis.</text>
</comment>
<comment type="similarity">
    <text evidence="4">Belongs to the DEAD box helicase family. DDX52/ROK1 subfamily.</text>
</comment>
<comment type="sequence caution" evidence="4">
    <conflict type="erroneous gene model prediction">
        <sequence resource="EMBL-CDS" id="AAF23311"/>
    </conflict>
</comment>
<reference key="1">
    <citation type="journal article" date="2000" name="Nature">
        <title>Sequence and analysis of chromosome 3 of the plant Arabidopsis thaliana.</title>
        <authorList>
            <person name="Salanoubat M."/>
            <person name="Lemcke K."/>
            <person name="Rieger M."/>
            <person name="Ansorge W."/>
            <person name="Unseld M."/>
            <person name="Fartmann B."/>
            <person name="Valle G."/>
            <person name="Bloecker H."/>
            <person name="Perez-Alonso M."/>
            <person name="Obermaier B."/>
            <person name="Delseny M."/>
            <person name="Boutry M."/>
            <person name="Grivell L.A."/>
            <person name="Mache R."/>
            <person name="Puigdomenech P."/>
            <person name="De Simone V."/>
            <person name="Choisne N."/>
            <person name="Artiguenave F."/>
            <person name="Robert C."/>
            <person name="Brottier P."/>
            <person name="Wincker P."/>
            <person name="Cattolico L."/>
            <person name="Weissenbach J."/>
            <person name="Saurin W."/>
            <person name="Quetier F."/>
            <person name="Schaefer M."/>
            <person name="Mueller-Auer S."/>
            <person name="Gabel C."/>
            <person name="Fuchs M."/>
            <person name="Benes V."/>
            <person name="Wurmbach E."/>
            <person name="Drzonek H."/>
            <person name="Erfle H."/>
            <person name="Jordan N."/>
            <person name="Bangert S."/>
            <person name="Wiedelmann R."/>
            <person name="Kranz H."/>
            <person name="Voss H."/>
            <person name="Holland R."/>
            <person name="Brandt P."/>
            <person name="Nyakatura G."/>
            <person name="Vezzi A."/>
            <person name="D'Angelo M."/>
            <person name="Pallavicini A."/>
            <person name="Toppo S."/>
            <person name="Simionati B."/>
            <person name="Conrad A."/>
            <person name="Hornischer K."/>
            <person name="Kauer G."/>
            <person name="Loehnert T.-H."/>
            <person name="Nordsiek G."/>
            <person name="Reichelt J."/>
            <person name="Scharfe M."/>
            <person name="Schoen O."/>
            <person name="Bargues M."/>
            <person name="Terol J."/>
            <person name="Climent J."/>
            <person name="Navarro P."/>
            <person name="Collado C."/>
            <person name="Perez-Perez A."/>
            <person name="Ottenwaelder B."/>
            <person name="Duchemin D."/>
            <person name="Cooke R."/>
            <person name="Laudie M."/>
            <person name="Berger-Llauro C."/>
            <person name="Purnelle B."/>
            <person name="Masuy D."/>
            <person name="de Haan M."/>
            <person name="Maarse A.C."/>
            <person name="Alcaraz J.-P."/>
            <person name="Cottet A."/>
            <person name="Casacuberta E."/>
            <person name="Monfort A."/>
            <person name="Argiriou A."/>
            <person name="Flores M."/>
            <person name="Liguori R."/>
            <person name="Vitale D."/>
            <person name="Mannhaupt G."/>
            <person name="Haase D."/>
            <person name="Schoof H."/>
            <person name="Rudd S."/>
            <person name="Zaccaria P."/>
            <person name="Mewes H.-W."/>
            <person name="Mayer K.F.X."/>
            <person name="Kaul S."/>
            <person name="Town C.D."/>
            <person name="Koo H.L."/>
            <person name="Tallon L.J."/>
            <person name="Jenkins J."/>
            <person name="Rooney T."/>
            <person name="Rizzo M."/>
            <person name="Walts A."/>
            <person name="Utterback T."/>
            <person name="Fujii C.Y."/>
            <person name="Shea T.P."/>
            <person name="Creasy T.H."/>
            <person name="Haas B."/>
            <person name="Maiti R."/>
            <person name="Wu D."/>
            <person name="Peterson J."/>
            <person name="Van Aken S."/>
            <person name="Pai G."/>
            <person name="Militscher J."/>
            <person name="Sellers P."/>
            <person name="Gill J.E."/>
            <person name="Feldblyum T.V."/>
            <person name="Preuss D."/>
            <person name="Lin X."/>
            <person name="Nierman W.C."/>
            <person name="Salzberg S.L."/>
            <person name="White O."/>
            <person name="Venter J.C."/>
            <person name="Fraser C.M."/>
            <person name="Kaneko T."/>
            <person name="Nakamura Y."/>
            <person name="Sato S."/>
            <person name="Kato T."/>
            <person name="Asamizu E."/>
            <person name="Sasamoto S."/>
            <person name="Kimura T."/>
            <person name="Idesawa K."/>
            <person name="Kawashima K."/>
            <person name="Kishida Y."/>
            <person name="Kiyokawa C."/>
            <person name="Kohara M."/>
            <person name="Matsumoto M."/>
            <person name="Matsuno A."/>
            <person name="Muraki A."/>
            <person name="Nakayama S."/>
            <person name="Nakazaki N."/>
            <person name="Shinpo S."/>
            <person name="Takeuchi C."/>
            <person name="Wada T."/>
            <person name="Watanabe A."/>
            <person name="Yamada M."/>
            <person name="Yasuda M."/>
            <person name="Tabata S."/>
        </authorList>
    </citation>
    <scope>NUCLEOTIDE SEQUENCE [LARGE SCALE GENOMIC DNA]</scope>
    <source>
        <strain>cv. Columbia</strain>
    </source>
</reference>
<reference key="2">
    <citation type="journal article" date="2017" name="Plant J.">
        <title>Araport11: a complete reannotation of the Arabidopsis thaliana reference genome.</title>
        <authorList>
            <person name="Cheng C.Y."/>
            <person name="Krishnakumar V."/>
            <person name="Chan A.P."/>
            <person name="Thibaud-Nissen F."/>
            <person name="Schobel S."/>
            <person name="Town C.D."/>
        </authorList>
    </citation>
    <scope>GENOME REANNOTATION</scope>
    <source>
        <strain>cv. Columbia</strain>
    </source>
</reference>
<reference key="3">
    <citation type="journal article" date="2003" name="Science">
        <title>Empirical analysis of transcriptional activity in the Arabidopsis genome.</title>
        <authorList>
            <person name="Yamada K."/>
            <person name="Lim J."/>
            <person name="Dale J.M."/>
            <person name="Chen H."/>
            <person name="Shinn P."/>
            <person name="Palm C.J."/>
            <person name="Southwick A.M."/>
            <person name="Wu H.C."/>
            <person name="Kim C.J."/>
            <person name="Nguyen M."/>
            <person name="Pham P.K."/>
            <person name="Cheuk R.F."/>
            <person name="Karlin-Newmann G."/>
            <person name="Liu S.X."/>
            <person name="Lam B."/>
            <person name="Sakano H."/>
            <person name="Wu T."/>
            <person name="Yu G."/>
            <person name="Miranda M."/>
            <person name="Quach H.L."/>
            <person name="Tripp M."/>
            <person name="Chang C.H."/>
            <person name="Lee J.M."/>
            <person name="Toriumi M.J."/>
            <person name="Chan M.M."/>
            <person name="Tang C.C."/>
            <person name="Onodera C.S."/>
            <person name="Deng J.M."/>
            <person name="Akiyama K."/>
            <person name="Ansari Y."/>
            <person name="Arakawa T."/>
            <person name="Banh J."/>
            <person name="Banno F."/>
            <person name="Bowser L."/>
            <person name="Brooks S.Y."/>
            <person name="Carninci P."/>
            <person name="Chao Q."/>
            <person name="Choy N."/>
            <person name="Enju A."/>
            <person name="Goldsmith A.D."/>
            <person name="Gurjal M."/>
            <person name="Hansen N.F."/>
            <person name="Hayashizaki Y."/>
            <person name="Johnson-Hopson C."/>
            <person name="Hsuan V.W."/>
            <person name="Iida K."/>
            <person name="Karnes M."/>
            <person name="Khan S."/>
            <person name="Koesema E."/>
            <person name="Ishida J."/>
            <person name="Jiang P.X."/>
            <person name="Jones T."/>
            <person name="Kawai J."/>
            <person name="Kamiya A."/>
            <person name="Meyers C."/>
            <person name="Nakajima M."/>
            <person name="Narusaka M."/>
            <person name="Seki M."/>
            <person name="Sakurai T."/>
            <person name="Satou M."/>
            <person name="Tamse R."/>
            <person name="Vaysberg M."/>
            <person name="Wallender E.K."/>
            <person name="Wong C."/>
            <person name="Yamamura Y."/>
            <person name="Yuan S."/>
            <person name="Shinozaki K."/>
            <person name="Davis R.W."/>
            <person name="Theologis A."/>
            <person name="Ecker J.R."/>
        </authorList>
    </citation>
    <scope>NUCLEOTIDE SEQUENCE [LARGE SCALE MRNA]</scope>
    <source>
        <strain>cv. Columbia</strain>
    </source>
</reference>
<reference key="4">
    <citation type="submission" date="2006-07" db="EMBL/GenBank/DDBJ databases">
        <title>Large-scale analysis of RIKEN Arabidopsis full-length (RAFL) cDNAs.</title>
        <authorList>
            <person name="Totoki Y."/>
            <person name="Seki M."/>
            <person name="Ishida J."/>
            <person name="Nakajima M."/>
            <person name="Enju A."/>
            <person name="Kamiya A."/>
            <person name="Narusaka M."/>
            <person name="Shin-i T."/>
            <person name="Nakagawa M."/>
            <person name="Sakamoto N."/>
            <person name="Oishi K."/>
            <person name="Kohara Y."/>
            <person name="Kobayashi M."/>
            <person name="Toyoda A."/>
            <person name="Sakaki Y."/>
            <person name="Sakurai T."/>
            <person name="Iida K."/>
            <person name="Akiyama K."/>
            <person name="Satou M."/>
            <person name="Toyoda T."/>
            <person name="Konagaya A."/>
            <person name="Carninci P."/>
            <person name="Kawai J."/>
            <person name="Hayashizaki Y."/>
            <person name="Shinozaki K."/>
        </authorList>
    </citation>
    <scope>NUCLEOTIDE SEQUENCE [LARGE SCALE MRNA]</scope>
    <source>
        <strain>cv. Columbia</strain>
    </source>
</reference>
<reference key="5">
    <citation type="journal article" date="2004" name="Plant Biotechnol. J.">
        <title>DEAD-box RNA helicases in Arabidopsis thaliana: establishing a link between quantitative expression, gene structure and evolution of a family of genes.</title>
        <authorList>
            <person name="Mingam A."/>
            <person name="Toffano-Nioche C."/>
            <person name="Brunaud V."/>
            <person name="Boudet N."/>
            <person name="Kreis M."/>
            <person name="Lecharny A."/>
        </authorList>
    </citation>
    <scope>GENE FAMILY</scope>
    <scope>NOMENCLATURE</scope>
</reference>
<reference key="6">
    <citation type="journal article" date="2013" name="PLoS ONE">
        <title>Genome-wide comparative in silico analysis of the RNA helicase gene family in Zea mays and Glycine max: a comparison with Arabidopsis and Oryza sativa.</title>
        <authorList>
            <person name="Xu R."/>
            <person name="Zhang S."/>
            <person name="Huang J."/>
            <person name="Zheng C."/>
        </authorList>
    </citation>
    <scope>GENE FAMILY</scope>
</reference>
<organism>
    <name type="scientific">Arabidopsis thaliana</name>
    <name type="common">Mouse-ear cress</name>
    <dbReference type="NCBI Taxonomy" id="3702"/>
    <lineage>
        <taxon>Eukaryota</taxon>
        <taxon>Viridiplantae</taxon>
        <taxon>Streptophyta</taxon>
        <taxon>Embryophyta</taxon>
        <taxon>Tracheophyta</taxon>
        <taxon>Spermatophyta</taxon>
        <taxon>Magnoliopsida</taxon>
        <taxon>eudicotyledons</taxon>
        <taxon>Gunneridae</taxon>
        <taxon>Pentapetalae</taxon>
        <taxon>rosids</taxon>
        <taxon>malvids</taxon>
        <taxon>Brassicales</taxon>
        <taxon>Brassicaceae</taxon>
        <taxon>Camelineae</taxon>
        <taxon>Arabidopsis</taxon>
    </lineage>
</organism>